<protein>
    <recommendedName>
        <fullName evidence="1">Large ribosomal subunit protein uL5</fullName>
    </recommendedName>
    <alternativeName>
        <fullName evidence="2">50S ribosomal protein L5</fullName>
    </alternativeName>
</protein>
<evidence type="ECO:0000255" key="1">
    <source>
        <dbReference type="HAMAP-Rule" id="MF_01333"/>
    </source>
</evidence>
<evidence type="ECO:0000305" key="2"/>
<comment type="function">
    <text evidence="1">This is one of the proteins that bind and probably mediate the attachment of the 5S RNA into the large ribosomal subunit, where it forms part of the central protuberance. In the 70S ribosome it contacts protein S13 of the 30S subunit (bridge B1b), connecting the 2 subunits; this bridge is implicated in subunit movement. Contacts the P site tRNA; the 5S rRNA and some of its associated proteins might help stabilize positioning of ribosome-bound tRNAs.</text>
</comment>
<comment type="subunit">
    <text evidence="1">Part of the 50S ribosomal subunit; part of the 5S rRNA/L5/L18/L25 subcomplex. Contacts the 5S rRNA and the P site tRNA. Forms a bridge to the 30S subunit in the 70S ribosome.</text>
</comment>
<comment type="similarity">
    <text evidence="1">Belongs to the universal ribosomal protein uL5 family.</text>
</comment>
<reference key="1">
    <citation type="journal article" date="2008" name="J. Bacteriol.">
        <title>Complete genome sequence of the soil actinomycete Kocuria rhizophila.</title>
        <authorList>
            <person name="Takarada H."/>
            <person name="Sekine M."/>
            <person name="Kosugi H."/>
            <person name="Matsuo Y."/>
            <person name="Fujisawa T."/>
            <person name="Omata S."/>
            <person name="Kishi E."/>
            <person name="Shimizu A."/>
            <person name="Tsukatani N."/>
            <person name="Tanikawa S."/>
            <person name="Fujita N."/>
            <person name="Harayama S."/>
        </authorList>
    </citation>
    <scope>NUCLEOTIDE SEQUENCE [LARGE SCALE GENOMIC DNA]</scope>
    <source>
        <strain>ATCC 9341 / DSM 348 / NBRC 103217 / DC2201</strain>
    </source>
</reference>
<gene>
    <name evidence="1" type="primary">rplE</name>
    <name type="ordered locus">KRH_06280</name>
</gene>
<dbReference type="EMBL" id="AP009152">
    <property type="protein sequence ID" value="BAG28975.1"/>
    <property type="molecule type" value="Genomic_DNA"/>
</dbReference>
<dbReference type="RefSeq" id="WP_012397700.1">
    <property type="nucleotide sequence ID" value="NZ_VECX01000001.1"/>
</dbReference>
<dbReference type="SMR" id="B2GJ05"/>
<dbReference type="STRING" id="378753.KRH_06280"/>
<dbReference type="KEGG" id="krh:KRH_06280"/>
<dbReference type="eggNOG" id="COG0094">
    <property type="taxonomic scope" value="Bacteria"/>
</dbReference>
<dbReference type="HOGENOM" id="CLU_061015_2_1_11"/>
<dbReference type="OrthoDB" id="9806626at2"/>
<dbReference type="Proteomes" id="UP000008838">
    <property type="component" value="Chromosome"/>
</dbReference>
<dbReference type="GO" id="GO:1990904">
    <property type="term" value="C:ribonucleoprotein complex"/>
    <property type="evidence" value="ECO:0007669"/>
    <property type="project" value="UniProtKB-KW"/>
</dbReference>
<dbReference type="GO" id="GO:0005840">
    <property type="term" value="C:ribosome"/>
    <property type="evidence" value="ECO:0007669"/>
    <property type="project" value="UniProtKB-KW"/>
</dbReference>
<dbReference type="GO" id="GO:0019843">
    <property type="term" value="F:rRNA binding"/>
    <property type="evidence" value="ECO:0007669"/>
    <property type="project" value="UniProtKB-UniRule"/>
</dbReference>
<dbReference type="GO" id="GO:0003735">
    <property type="term" value="F:structural constituent of ribosome"/>
    <property type="evidence" value="ECO:0007669"/>
    <property type="project" value="InterPro"/>
</dbReference>
<dbReference type="GO" id="GO:0000049">
    <property type="term" value="F:tRNA binding"/>
    <property type="evidence" value="ECO:0007669"/>
    <property type="project" value="UniProtKB-UniRule"/>
</dbReference>
<dbReference type="GO" id="GO:0006412">
    <property type="term" value="P:translation"/>
    <property type="evidence" value="ECO:0007669"/>
    <property type="project" value="UniProtKB-UniRule"/>
</dbReference>
<dbReference type="FunFam" id="3.30.1440.10:FF:000001">
    <property type="entry name" value="50S ribosomal protein L5"/>
    <property type="match status" value="1"/>
</dbReference>
<dbReference type="Gene3D" id="3.30.1440.10">
    <property type="match status" value="1"/>
</dbReference>
<dbReference type="HAMAP" id="MF_01333_B">
    <property type="entry name" value="Ribosomal_uL5_B"/>
    <property type="match status" value="1"/>
</dbReference>
<dbReference type="InterPro" id="IPR002132">
    <property type="entry name" value="Ribosomal_uL5"/>
</dbReference>
<dbReference type="InterPro" id="IPR020930">
    <property type="entry name" value="Ribosomal_uL5_bac-type"/>
</dbReference>
<dbReference type="InterPro" id="IPR031309">
    <property type="entry name" value="Ribosomal_uL5_C"/>
</dbReference>
<dbReference type="InterPro" id="IPR022803">
    <property type="entry name" value="Ribosomal_uL5_dom_sf"/>
</dbReference>
<dbReference type="InterPro" id="IPR031310">
    <property type="entry name" value="Ribosomal_uL5_N"/>
</dbReference>
<dbReference type="NCBIfam" id="NF000585">
    <property type="entry name" value="PRK00010.1"/>
    <property type="match status" value="1"/>
</dbReference>
<dbReference type="PANTHER" id="PTHR11994">
    <property type="entry name" value="60S RIBOSOMAL PROTEIN L11-RELATED"/>
    <property type="match status" value="1"/>
</dbReference>
<dbReference type="Pfam" id="PF00281">
    <property type="entry name" value="Ribosomal_L5"/>
    <property type="match status" value="1"/>
</dbReference>
<dbReference type="Pfam" id="PF00673">
    <property type="entry name" value="Ribosomal_L5_C"/>
    <property type="match status" value="1"/>
</dbReference>
<dbReference type="PIRSF" id="PIRSF002161">
    <property type="entry name" value="Ribosomal_L5"/>
    <property type="match status" value="1"/>
</dbReference>
<dbReference type="SUPFAM" id="SSF55282">
    <property type="entry name" value="RL5-like"/>
    <property type="match status" value="1"/>
</dbReference>
<proteinExistence type="inferred from homology"/>
<organism>
    <name type="scientific">Kocuria rhizophila (strain ATCC 9341 / DSM 348 / NBRC 103217 / DC2201)</name>
    <dbReference type="NCBI Taxonomy" id="378753"/>
    <lineage>
        <taxon>Bacteria</taxon>
        <taxon>Bacillati</taxon>
        <taxon>Actinomycetota</taxon>
        <taxon>Actinomycetes</taxon>
        <taxon>Micrococcales</taxon>
        <taxon>Micrococcaceae</taxon>
        <taxon>Kocuria</taxon>
    </lineage>
</organism>
<accession>B2GJ05</accession>
<sequence length="189" mass="21346">MSETTETKFTPRFKTKYQETVAPALQEQFGYANVMEMPRVVKVVVNMGLGEAAKDSKLVDNAIKDLTAITGQKPVINRAKKSIAQFKLREGMPIGAHVTMRGDRMWEFLDRLVTLALPRIRDFRGLSDRHFDGNGNYTFGLTEQSMFHEIDQDKIDRVRGMDITVVTSAKTDDEGRALLKALGFPFKTN</sequence>
<name>RL5_KOCRD</name>
<feature type="chain" id="PRO_1000142414" description="Large ribosomal subunit protein uL5">
    <location>
        <begin position="1"/>
        <end position="189"/>
    </location>
</feature>
<keyword id="KW-1185">Reference proteome</keyword>
<keyword id="KW-0687">Ribonucleoprotein</keyword>
<keyword id="KW-0689">Ribosomal protein</keyword>
<keyword id="KW-0694">RNA-binding</keyword>
<keyword id="KW-0699">rRNA-binding</keyword>
<keyword id="KW-0820">tRNA-binding</keyword>